<proteinExistence type="inferred from homology"/>
<name>RSMH_LACE2</name>
<accession>C4Z530</accession>
<dbReference type="EC" id="2.1.1.199" evidence="1"/>
<dbReference type="EMBL" id="CP001104">
    <property type="protein sequence ID" value="ACR71734.1"/>
    <property type="molecule type" value="Genomic_DNA"/>
</dbReference>
<dbReference type="SMR" id="C4Z530"/>
<dbReference type="STRING" id="515620.EUBELI_00726"/>
<dbReference type="KEGG" id="eel:EUBELI_00726"/>
<dbReference type="eggNOG" id="COG0275">
    <property type="taxonomic scope" value="Bacteria"/>
</dbReference>
<dbReference type="HOGENOM" id="CLU_038422_2_0_9"/>
<dbReference type="Proteomes" id="UP000001476">
    <property type="component" value="Chromosome"/>
</dbReference>
<dbReference type="GO" id="GO:0005737">
    <property type="term" value="C:cytoplasm"/>
    <property type="evidence" value="ECO:0007669"/>
    <property type="project" value="UniProtKB-SubCell"/>
</dbReference>
<dbReference type="GO" id="GO:0071424">
    <property type="term" value="F:rRNA (cytosine-N4-)-methyltransferase activity"/>
    <property type="evidence" value="ECO:0007669"/>
    <property type="project" value="UniProtKB-UniRule"/>
</dbReference>
<dbReference type="GO" id="GO:0070475">
    <property type="term" value="P:rRNA base methylation"/>
    <property type="evidence" value="ECO:0007669"/>
    <property type="project" value="UniProtKB-UniRule"/>
</dbReference>
<dbReference type="Gene3D" id="1.10.150.170">
    <property type="entry name" value="Putative methyltransferase TM0872, insert domain"/>
    <property type="match status" value="1"/>
</dbReference>
<dbReference type="Gene3D" id="3.40.50.150">
    <property type="entry name" value="Vaccinia Virus protein VP39"/>
    <property type="match status" value="1"/>
</dbReference>
<dbReference type="HAMAP" id="MF_01007">
    <property type="entry name" value="16SrRNA_methyltr_H"/>
    <property type="match status" value="1"/>
</dbReference>
<dbReference type="InterPro" id="IPR002903">
    <property type="entry name" value="RsmH"/>
</dbReference>
<dbReference type="InterPro" id="IPR023397">
    <property type="entry name" value="SAM-dep_MeTrfase_MraW_recog"/>
</dbReference>
<dbReference type="InterPro" id="IPR029063">
    <property type="entry name" value="SAM-dependent_MTases_sf"/>
</dbReference>
<dbReference type="NCBIfam" id="TIGR00006">
    <property type="entry name" value="16S rRNA (cytosine(1402)-N(4))-methyltransferase RsmH"/>
    <property type="match status" value="1"/>
</dbReference>
<dbReference type="PANTHER" id="PTHR11265:SF0">
    <property type="entry name" value="12S RRNA N4-METHYLCYTIDINE METHYLTRANSFERASE"/>
    <property type="match status" value="1"/>
</dbReference>
<dbReference type="PANTHER" id="PTHR11265">
    <property type="entry name" value="S-ADENOSYL-METHYLTRANSFERASE MRAW"/>
    <property type="match status" value="1"/>
</dbReference>
<dbReference type="Pfam" id="PF01795">
    <property type="entry name" value="Methyltransf_5"/>
    <property type="match status" value="1"/>
</dbReference>
<dbReference type="PIRSF" id="PIRSF004486">
    <property type="entry name" value="MraW"/>
    <property type="match status" value="1"/>
</dbReference>
<dbReference type="SUPFAM" id="SSF81799">
    <property type="entry name" value="Putative methyltransferase TM0872, insert domain"/>
    <property type="match status" value="1"/>
</dbReference>
<dbReference type="SUPFAM" id="SSF53335">
    <property type="entry name" value="S-adenosyl-L-methionine-dependent methyltransferases"/>
    <property type="match status" value="1"/>
</dbReference>
<gene>
    <name evidence="1" type="primary">rsmH</name>
    <name type="synonym">mraW</name>
    <name type="ordered locus">EUBELI_00726</name>
</gene>
<sequence length="315" mass="35685">MGFIMEFKHKSVLLEETIDNLNIKPDGIYVDGTLGGAGHSYQIAKRLTGGGRLIGIDQDADAIAAATERLKEFEERVTIVRNNYCNMDKVLDELGIDKVDGILLDIGVSSYQLDTASRGFTYNVDTALDMRMDQRQEMTAKDLVNTYSEMELFRIIRDYGEDRFAKNIAKHIVAARKEKPIETTFELNEIIKASIPAKVRATGGHPSKRTYQAIRIELNRELDVLENSIDMMIDRLNPQGRLCIITFHSLEDRIVKARFRNNENPCTCPPDFPVCVCGKKSKGKVITRKPIVPGDEELNENQRSKSSKLRVFERI</sequence>
<reference key="1">
    <citation type="journal article" date="2009" name="Proc. Natl. Acad. Sci. U.S.A.">
        <title>Characterizing a model human gut microbiota composed of members of its two dominant bacterial phyla.</title>
        <authorList>
            <person name="Mahowald M.A."/>
            <person name="Rey F.E."/>
            <person name="Seedorf H."/>
            <person name="Turnbaugh P.J."/>
            <person name="Fulton R.S."/>
            <person name="Wollam A."/>
            <person name="Shah N."/>
            <person name="Wang C."/>
            <person name="Magrini V."/>
            <person name="Wilson R.K."/>
            <person name="Cantarel B.L."/>
            <person name="Coutinho P.M."/>
            <person name="Henrissat B."/>
            <person name="Crock L.W."/>
            <person name="Russell A."/>
            <person name="Verberkmoes N.C."/>
            <person name="Hettich R.L."/>
            <person name="Gordon J.I."/>
        </authorList>
    </citation>
    <scope>NUCLEOTIDE SEQUENCE [LARGE SCALE GENOMIC DNA]</scope>
    <source>
        <strain>ATCC 27750 / DSM 3376 / VPI C15-48 / C15-B4</strain>
    </source>
</reference>
<protein>
    <recommendedName>
        <fullName evidence="1">Ribosomal RNA small subunit methyltransferase H</fullName>
        <ecNumber evidence="1">2.1.1.199</ecNumber>
    </recommendedName>
    <alternativeName>
        <fullName evidence="1">16S rRNA m(4)C1402 methyltransferase</fullName>
    </alternativeName>
    <alternativeName>
        <fullName evidence="1">rRNA (cytosine-N(4)-)-methyltransferase RsmH</fullName>
    </alternativeName>
</protein>
<organism>
    <name type="scientific">Lachnospira eligens (strain ATCC 27750 / DSM 3376 / VPI C15-48 / C15-B4)</name>
    <name type="common">Eubacterium eligens</name>
    <dbReference type="NCBI Taxonomy" id="515620"/>
    <lineage>
        <taxon>Bacteria</taxon>
        <taxon>Bacillati</taxon>
        <taxon>Bacillota</taxon>
        <taxon>Clostridia</taxon>
        <taxon>Lachnospirales</taxon>
        <taxon>Lachnospiraceae</taxon>
        <taxon>Lachnospira</taxon>
    </lineage>
</organism>
<comment type="function">
    <text evidence="1">Specifically methylates the N4 position of cytidine in position 1402 (C1402) of 16S rRNA.</text>
</comment>
<comment type="catalytic activity">
    <reaction evidence="1">
        <text>cytidine(1402) in 16S rRNA + S-adenosyl-L-methionine = N(4)-methylcytidine(1402) in 16S rRNA + S-adenosyl-L-homocysteine + H(+)</text>
        <dbReference type="Rhea" id="RHEA:42928"/>
        <dbReference type="Rhea" id="RHEA-COMP:10286"/>
        <dbReference type="Rhea" id="RHEA-COMP:10287"/>
        <dbReference type="ChEBI" id="CHEBI:15378"/>
        <dbReference type="ChEBI" id="CHEBI:57856"/>
        <dbReference type="ChEBI" id="CHEBI:59789"/>
        <dbReference type="ChEBI" id="CHEBI:74506"/>
        <dbReference type="ChEBI" id="CHEBI:82748"/>
        <dbReference type="EC" id="2.1.1.199"/>
    </reaction>
</comment>
<comment type="subcellular location">
    <subcellularLocation>
        <location evidence="1">Cytoplasm</location>
    </subcellularLocation>
</comment>
<comment type="similarity">
    <text evidence="1">Belongs to the methyltransferase superfamily. RsmH family.</text>
</comment>
<evidence type="ECO:0000255" key="1">
    <source>
        <dbReference type="HAMAP-Rule" id="MF_01007"/>
    </source>
</evidence>
<keyword id="KW-0963">Cytoplasm</keyword>
<keyword id="KW-0489">Methyltransferase</keyword>
<keyword id="KW-1185">Reference proteome</keyword>
<keyword id="KW-0698">rRNA processing</keyword>
<keyword id="KW-0949">S-adenosyl-L-methionine</keyword>
<keyword id="KW-0808">Transferase</keyword>
<feature type="chain" id="PRO_0000386888" description="Ribosomal RNA small subunit methyltransferase H">
    <location>
        <begin position="1"/>
        <end position="315"/>
    </location>
</feature>
<feature type="binding site" evidence="1">
    <location>
        <begin position="37"/>
        <end position="39"/>
    </location>
    <ligand>
        <name>S-adenosyl-L-methionine</name>
        <dbReference type="ChEBI" id="CHEBI:59789"/>
    </ligand>
</feature>
<feature type="binding site" evidence="1">
    <location>
        <position position="57"/>
    </location>
    <ligand>
        <name>S-adenosyl-L-methionine</name>
        <dbReference type="ChEBI" id="CHEBI:59789"/>
    </ligand>
</feature>
<feature type="binding site" evidence="1">
    <location>
        <position position="84"/>
    </location>
    <ligand>
        <name>S-adenosyl-L-methionine</name>
        <dbReference type="ChEBI" id="CHEBI:59789"/>
    </ligand>
</feature>
<feature type="binding site" evidence="1">
    <location>
        <position position="105"/>
    </location>
    <ligand>
        <name>S-adenosyl-L-methionine</name>
        <dbReference type="ChEBI" id="CHEBI:59789"/>
    </ligand>
</feature>
<feature type="binding site" evidence="1">
    <location>
        <position position="112"/>
    </location>
    <ligand>
        <name>S-adenosyl-L-methionine</name>
        <dbReference type="ChEBI" id="CHEBI:59789"/>
    </ligand>
</feature>